<proteinExistence type="evidence at transcript level"/>
<organism>
    <name type="scientific">Bos taurus</name>
    <name type="common">Bovine</name>
    <dbReference type="NCBI Taxonomy" id="9913"/>
    <lineage>
        <taxon>Eukaryota</taxon>
        <taxon>Metazoa</taxon>
        <taxon>Chordata</taxon>
        <taxon>Craniata</taxon>
        <taxon>Vertebrata</taxon>
        <taxon>Euteleostomi</taxon>
        <taxon>Mammalia</taxon>
        <taxon>Eutheria</taxon>
        <taxon>Laurasiatheria</taxon>
        <taxon>Artiodactyla</taxon>
        <taxon>Ruminantia</taxon>
        <taxon>Pecora</taxon>
        <taxon>Bovidae</taxon>
        <taxon>Bovinae</taxon>
        <taxon>Bos</taxon>
    </lineage>
</organism>
<gene>
    <name evidence="5" type="primary">SOLD1</name>
    <name evidence="4" type="synonym">BOP1</name>
</gene>
<name>SOLD1_BOVIN</name>
<evidence type="ECO:0000255" key="1"/>
<evidence type="ECO:0000269" key="2">
    <source>
    </source>
</evidence>
<evidence type="ECO:0000269" key="3">
    <source>
    </source>
</evidence>
<evidence type="ECO:0000303" key="4">
    <source>
    </source>
</evidence>
<evidence type="ECO:0000303" key="5">
    <source>
    </source>
</evidence>
<evidence type="ECO:0000305" key="6"/>
<evidence type="ECO:0000312" key="7">
    <source>
        <dbReference type="EMBL" id="BAH70331.1"/>
    </source>
</evidence>
<reference evidence="7" key="1">
    <citation type="journal article" date="2009" name="PLoS ONE">
        <title>Characterization and expression analysis of SOLD1, a novel member of the retrotransposon-derived Ly-6 superfamily, in bovine placental villi.</title>
        <authorList>
            <person name="Ushizawa K."/>
            <person name="Takahashi T."/>
            <person name="Hosoe M."/>
            <person name="Kizaki K."/>
            <person name="Hashizume K."/>
        </authorList>
    </citation>
    <scope>NUCLEOTIDE SEQUENCE [MRNA]</scope>
    <scope>FUNCTION</scope>
    <scope>SUBCELLULAR LOCATION</scope>
    <scope>TISSUE SPECIFICITY</scope>
    <scope>GLYCOSYLATION</scope>
    <source>
        <tissue evidence="7">Placenta</tissue>
    </source>
</reference>
<reference key="2">
    <citation type="journal article" date="2001" name="Genome Res.">
        <title>Sequence evaluation of four pooled-tissue normalized bovine cDNA libraries and construction of a gene index for cattle.</title>
        <authorList>
            <person name="Smith T.P.L."/>
            <person name="Grosse W.M."/>
            <person name="Freking B.A."/>
            <person name="Roberts A.J."/>
            <person name="Stone R.T."/>
            <person name="Casas E."/>
            <person name="Wray J.E."/>
            <person name="White J."/>
            <person name="Cho J."/>
            <person name="Fahrenkrug S.C."/>
            <person name="Bennett G.L."/>
            <person name="Heaton M.P."/>
            <person name="Laegreid W.W."/>
            <person name="Rohrer G.A."/>
            <person name="Chitko-McKown C.G."/>
            <person name="Pertea G."/>
            <person name="Holt I."/>
            <person name="Karamycheva S."/>
            <person name="Liang F."/>
            <person name="Quackenbush J."/>
            <person name="Keele J.W."/>
        </authorList>
    </citation>
    <scope>NUCLEOTIDE SEQUENCE [LARGE SCALE MRNA]</scope>
    <source>
        <tissue>Embryo</tissue>
    </source>
</reference>
<reference key="3">
    <citation type="journal article" date="2007" name="BMC Genomics">
        <title>Discovery and characterization of 91 novel transcripts expressed in cattle placenta.</title>
        <authorList>
            <person name="Kumar C.G."/>
            <person name="Larson J.H."/>
            <person name="Band M.R."/>
            <person name="Lewin H.A."/>
        </authorList>
    </citation>
    <scope>NUCLEOTIDE SEQUENCE [LARGE SCALE MRNA]</scope>
    <source>
        <tissue>Placenta</tissue>
    </source>
</reference>
<reference key="4">
    <citation type="submission" date="2007-07" db="EMBL/GenBank/DDBJ databases">
        <authorList>
            <consortium name="NIH - Mammalian Gene Collection (MGC) project"/>
        </authorList>
    </citation>
    <scope>NUCLEOTIDE SEQUENCE [LARGE SCALE MRNA]</scope>
    <source>
        <strain>Hereford</strain>
        <tissue>Placenta</tissue>
    </source>
</reference>
<reference key="5">
    <citation type="journal article" date="2002" name="Proteomics">
        <title>The characterisation of novel secreted Ly-6 proteins from rat urine by the combined use of two-dimensional gel electrophoresis, microbore high performance liquid chromatography and expressed sequence tag data.</title>
        <authorList>
            <person name="Southan C."/>
            <person name="Cutler P."/>
            <person name="Birrell H."/>
            <person name="Connell J."/>
            <person name="Fantom K.G.M."/>
            <person name="Sims M."/>
            <person name="Shaikh N."/>
            <person name="Schneider K."/>
        </authorList>
    </citation>
    <scope>IDENTIFICATION</scope>
</reference>
<reference evidence="6" key="6">
    <citation type="journal article" date="2013" name="Placenta">
        <title>Dynamic expression of SOLD1 in bovine uteroplacental tissues during gestation.</title>
        <authorList>
            <person name="Awad M."/>
            <person name="Kizaki K."/>
            <person name="Takahashi T."/>
            <person name="Hashizume K."/>
        </authorList>
    </citation>
    <scope>TISSUE SPECIFICITY</scope>
    <scope>DEVELOPMENTAL STAGE</scope>
</reference>
<protein>
    <recommendedName>
        <fullName evidence="5">Secreted protein of Ly-6 domain 1</fullName>
    </recommendedName>
    <alternativeName>
        <fullName evidence="4">Protein BOP1</fullName>
    </alternativeName>
</protein>
<dbReference type="EMBL" id="AB297495">
    <property type="protein sequence ID" value="BAH70331.1"/>
    <property type="molecule type" value="mRNA"/>
</dbReference>
<dbReference type="EMBL" id="BE683716">
    <property type="status" value="NOT_ANNOTATED_CDS"/>
    <property type="molecule type" value="mRNA"/>
</dbReference>
<dbReference type="EMBL" id="EU846101">
    <property type="protein sequence ID" value="ACF60485.1"/>
    <property type="molecule type" value="mRNA"/>
</dbReference>
<dbReference type="EMBL" id="BC149580">
    <property type="protein sequence ID" value="AAI49581.1"/>
    <property type="molecule type" value="mRNA"/>
</dbReference>
<dbReference type="RefSeq" id="NP_001098948.1">
    <property type="nucleotide sequence ID" value="NM_001105478.1"/>
</dbReference>
<dbReference type="SMR" id="P83107"/>
<dbReference type="FunCoup" id="P83107">
    <property type="interactions" value="37"/>
</dbReference>
<dbReference type="STRING" id="9913.ENSBTAP00000061582"/>
<dbReference type="GlyCosmos" id="P83107">
    <property type="glycosylation" value="1 site, No reported glycans"/>
</dbReference>
<dbReference type="GlyGen" id="P83107">
    <property type="glycosylation" value="1 site"/>
</dbReference>
<dbReference type="PaxDb" id="9913-ENSBTAP00000056241"/>
<dbReference type="Ensembl" id="ENSBTAT00000067325.1">
    <property type="protein sequence ID" value="ENSBTAP00000061582.1"/>
    <property type="gene ID" value="ENSBTAG00000052794.2"/>
</dbReference>
<dbReference type="GeneID" id="100125878"/>
<dbReference type="KEGG" id="bta:100125878"/>
<dbReference type="CTD" id="100125878"/>
<dbReference type="VEuPathDB" id="HostDB:ENSBTAG00000052794"/>
<dbReference type="eggNOG" id="ENOG502TDW1">
    <property type="taxonomic scope" value="Eukaryota"/>
</dbReference>
<dbReference type="GeneTree" id="ENSGT00940000163158"/>
<dbReference type="InParanoid" id="P83107"/>
<dbReference type="OMA" id="CANICFT"/>
<dbReference type="OrthoDB" id="4779276at2759"/>
<dbReference type="Proteomes" id="UP000009136">
    <property type="component" value="Chromosome 29"/>
</dbReference>
<dbReference type="Bgee" id="ENSBTAG00000052794">
    <property type="expression patterns" value="Expressed in conceptus and 75 other cell types or tissues"/>
</dbReference>
<dbReference type="GO" id="GO:0005615">
    <property type="term" value="C:extracellular space"/>
    <property type="evidence" value="ECO:0000314"/>
    <property type="project" value="UniProtKB"/>
</dbReference>
<dbReference type="GO" id="GO:0005518">
    <property type="term" value="F:collagen binding"/>
    <property type="evidence" value="ECO:0000314"/>
    <property type="project" value="UniProtKB"/>
</dbReference>
<dbReference type="CDD" id="cd23628">
    <property type="entry name" value="TFP_LU_ECD_SP10_like"/>
    <property type="match status" value="1"/>
</dbReference>
<dbReference type="InterPro" id="IPR016054">
    <property type="entry name" value="LY6_UPA_recep-like"/>
</dbReference>
<dbReference type="Pfam" id="PF00021">
    <property type="entry name" value="UPAR_LY6"/>
    <property type="match status" value="1"/>
</dbReference>
<accession>P83107</accession>
<accession>A6QQ03</accession>
<accession>B5AFL1</accession>
<accession>C4T8T2</accession>
<keyword id="KW-1015">Disulfide bond</keyword>
<keyword id="KW-0325">Glycoprotein</keyword>
<keyword id="KW-1185">Reference proteome</keyword>
<keyword id="KW-0964">Secreted</keyword>
<keyword id="KW-0732">Signal</keyword>
<feature type="signal peptide" evidence="1">
    <location>
        <begin position="1"/>
        <end position="22"/>
    </location>
</feature>
<feature type="chain" id="PRO_0000036172" description="Secreted protein of Ly-6 domain 1">
    <location>
        <begin position="23"/>
        <end position="100"/>
    </location>
</feature>
<feature type="domain" description="UPAR/Ly6" evidence="6">
    <location>
        <begin position="23"/>
        <end position="100"/>
    </location>
</feature>
<feature type="glycosylation site" description="N-linked (GlcNAc...) asparagine" evidence="1">
    <location>
        <position position="60"/>
    </location>
</feature>
<feature type="disulfide bond" evidence="1">
    <location>
        <begin position="25"/>
        <end position="52"/>
    </location>
</feature>
<feature type="disulfide bond" evidence="1">
    <location>
        <begin position="28"/>
        <end position="37"/>
    </location>
</feature>
<feature type="disulfide bond" evidence="1">
    <location>
        <begin position="44"/>
        <end position="70"/>
    </location>
</feature>
<feature type="disulfide bond" evidence="1">
    <location>
        <begin position="74"/>
        <end position="90"/>
    </location>
</feature>
<feature type="disulfide bond" evidence="1">
    <location>
        <begin position="91"/>
        <end position="97"/>
    </location>
</feature>
<comment type="function">
    <text evidence="2">Binds specifically to type I collagen.</text>
</comment>
<comment type="subcellular location">
    <subcellularLocation>
        <location evidence="2">Secreted</location>
    </subcellularLocation>
    <text evidence="2">Probably secreted from the basolateral region of the cell near the extracellular matrix.</text>
</comment>
<comment type="tissue specificity">
    <text evidence="2 3">Expressed in placenta, where it is detected in both fetal tissues (cotyledon and intercotyledon) and maternal tissues (caruncle and intercaruncular endometrium) (at protein level) (PubMed:19503832, PubMed:23759217). Expressed in the mesenchyme area of villi in the cotyledon (at protein level) (PubMed:19503832, PubMed:23759217). In endometrium, expressed in the luminal epithelium and weakly in the subluminal stroma (at protein level) (PubMed:23759217). Detected in trophoblast mononucleate cells (TMCs) (at protein level) (PubMed:19503832). Also detected in trophoblast binucleate cells (BNCs) (PubMed:23759217). Overall, expression is strongest in fetal tissue and lower in maternal tissue (PubMed:19503832, PubMed:23759217). Not detected in other tissues tested (PubMed:19503832).</text>
</comment>
<comment type="developmental stage">
    <text evidence="2 3">Detected in the placenta from day 11 of gestation onwards (PubMed:19503832, PubMed:23759217). Expressed in the conceptus at the pre- and peri-implantation stages (gestational days 11-21) (PubMed:19503832). Expressed in the extra-embryonic membrane at the post-implantation stage (gestational days 27-33), although expression appears to decline temporarily at gestational day 27 (PubMed:19503832). Expressed in cotyledon from early to late gestation (gestational days 60 to 250), with highest expression levels at gestational day 60 and declining expression thereafter (PubMed:19503832, PubMed:23759217). Also expressed in intercotyledon from gestational day 60 onwards, reaching maximum expression levels during late gestation (PubMed:19503832, PubMed:23759217). Expressed in caruncle from early to late gestation, reaching maximum expression at the late gestation stage (PubMed:23759217). Has low expression in intercarunclar tissue during early gestation, but expression levels increase by mid gestation and remain high during late gestation (PubMed:23759217).</text>
</comment>
<comment type="PTM">
    <text evidence="2">Glycosylated.</text>
</comment>
<sequence length="100" mass="10951">MAKCLLLLLLVVLSSLLGLPQALECFQCNRVNASGVCETGGSTCQTQGSQQCFLRRIFENGTLSYGHQGCSQLCIPMKLFNPSVIVEYKCCHDSPLCNKF</sequence>